<comment type="function">
    <text evidence="4">Probable phosphomutase that may have a function related to the manipulation of phosphate groups on carbohydrates. Reduces trehalose-6-phosphate levels when overexpressed in TPS2-deleted cells. Reduces 5'-Phosphoribosyl-4-carboxamide-5-aminoimidazole (AICAR) levels, a metabolic intermediate at the crossroads between AMP and histidine biosynthesis pathways, when overexpressed in a ADE3-ADE16-ADE17 triple deletant.</text>
</comment>
<comment type="interaction">
    <interactant intactId="EBI-26862">
        <id>P36069</id>
    </interactant>
    <interactant intactId="EBI-16219">
        <id>P39940</id>
        <label>RSP5</label>
    </interactant>
    <organismsDiffer>false</organismsDiffer>
    <experiments>2</experiments>
</comment>
<comment type="subcellular location">
    <subcellularLocation>
        <location evidence="2">Cytoplasm</location>
    </subcellularLocation>
    <subcellularLocation>
        <location evidence="2">Nucleus</location>
    </subcellularLocation>
</comment>
<comment type="miscellaneous">
    <text evidence="3">Present with 3250 molecules/cell in log phase SD medium.</text>
</comment>
<comment type="similarity">
    <text evidence="6">Belongs to the phosphoglycerate mutase family.</text>
</comment>
<organism>
    <name type="scientific">Saccharomyces cerevisiae (strain ATCC 204508 / S288c)</name>
    <name type="common">Baker's yeast</name>
    <dbReference type="NCBI Taxonomy" id="559292"/>
    <lineage>
        <taxon>Eukaryota</taxon>
        <taxon>Fungi</taxon>
        <taxon>Dikarya</taxon>
        <taxon>Ascomycota</taxon>
        <taxon>Saccharomycotina</taxon>
        <taxon>Saccharomycetes</taxon>
        <taxon>Saccharomycetales</taxon>
        <taxon>Saccharomycetaceae</taxon>
        <taxon>Saccharomyces</taxon>
    </lineage>
</organism>
<dbReference type="EC" id="5.4.-.-"/>
<dbReference type="EMBL" id="Z28128">
    <property type="protein sequence ID" value="CAA81969.1"/>
    <property type="molecule type" value="Genomic_DNA"/>
</dbReference>
<dbReference type="EMBL" id="AY692900">
    <property type="protein sequence ID" value="AAT92919.1"/>
    <property type="molecule type" value="Genomic_DNA"/>
</dbReference>
<dbReference type="EMBL" id="BK006944">
    <property type="protein sequence ID" value="DAA09033.1"/>
    <property type="molecule type" value="Genomic_DNA"/>
</dbReference>
<dbReference type="PIR" id="S37957">
    <property type="entry name" value="S37957"/>
</dbReference>
<dbReference type="RefSeq" id="NP_012794.1">
    <property type="nucleotide sequence ID" value="NM_001179694.1"/>
</dbReference>
<dbReference type="SMR" id="P36069"/>
<dbReference type="BioGRID" id="34007">
    <property type="interactions" value="41"/>
</dbReference>
<dbReference type="FunCoup" id="P36069">
    <property type="interactions" value="255"/>
</dbReference>
<dbReference type="IntAct" id="P36069">
    <property type="interactions" value="2"/>
</dbReference>
<dbReference type="MINT" id="P36069"/>
<dbReference type="STRING" id="4932.YKL128C"/>
<dbReference type="iPTMnet" id="P36069"/>
<dbReference type="PaxDb" id="4932-YKL128C"/>
<dbReference type="PeptideAtlas" id="P36069"/>
<dbReference type="EnsemblFungi" id="YKL128C_mRNA">
    <property type="protein sequence ID" value="YKL128C"/>
    <property type="gene ID" value="YKL128C"/>
</dbReference>
<dbReference type="GeneID" id="853730"/>
<dbReference type="KEGG" id="sce:YKL128C"/>
<dbReference type="AGR" id="SGD:S000001611"/>
<dbReference type="SGD" id="S000001611">
    <property type="gene designation" value="PMU1"/>
</dbReference>
<dbReference type="VEuPathDB" id="FungiDB:YKL128C"/>
<dbReference type="eggNOG" id="KOG4754">
    <property type="taxonomic scope" value="Eukaryota"/>
</dbReference>
<dbReference type="HOGENOM" id="CLU_039184_0_0_1"/>
<dbReference type="InParanoid" id="P36069"/>
<dbReference type="OMA" id="NWVDARL"/>
<dbReference type="OrthoDB" id="496981at2759"/>
<dbReference type="BioCyc" id="YEAST:G3O-31909-MONOMER"/>
<dbReference type="BioGRID-ORCS" id="853730">
    <property type="hits" value="4 hits in 10 CRISPR screens"/>
</dbReference>
<dbReference type="PRO" id="PR:P36069"/>
<dbReference type="Proteomes" id="UP000002311">
    <property type="component" value="Chromosome XI"/>
</dbReference>
<dbReference type="RNAct" id="P36069">
    <property type="molecule type" value="protein"/>
</dbReference>
<dbReference type="GO" id="GO:0005737">
    <property type="term" value="C:cytoplasm"/>
    <property type="evidence" value="ECO:0007005"/>
    <property type="project" value="SGD"/>
</dbReference>
<dbReference type="GO" id="GO:0005634">
    <property type="term" value="C:nucleus"/>
    <property type="evidence" value="ECO:0007005"/>
    <property type="project" value="SGD"/>
</dbReference>
<dbReference type="GO" id="GO:0005777">
    <property type="term" value="C:peroxisome"/>
    <property type="evidence" value="ECO:0000314"/>
    <property type="project" value="SGD"/>
</dbReference>
<dbReference type="GO" id="GO:0016853">
    <property type="term" value="F:isomerase activity"/>
    <property type="evidence" value="ECO:0007669"/>
    <property type="project" value="UniProtKB-KW"/>
</dbReference>
<dbReference type="GO" id="GO:0016791">
    <property type="term" value="F:phosphatase activity"/>
    <property type="evidence" value="ECO:0000318"/>
    <property type="project" value="GO_Central"/>
</dbReference>
<dbReference type="CDD" id="cd07067">
    <property type="entry name" value="HP_PGM_like"/>
    <property type="match status" value="1"/>
</dbReference>
<dbReference type="FunFam" id="3.40.50.1240:FF:000054">
    <property type="entry name" value="Putative phosphomutase"/>
    <property type="match status" value="1"/>
</dbReference>
<dbReference type="Gene3D" id="3.40.50.1240">
    <property type="entry name" value="Phosphoglycerate mutase-like"/>
    <property type="match status" value="1"/>
</dbReference>
<dbReference type="InterPro" id="IPR013078">
    <property type="entry name" value="His_Pase_superF_clade-1"/>
</dbReference>
<dbReference type="InterPro" id="IPR029033">
    <property type="entry name" value="His_PPase_superfam"/>
</dbReference>
<dbReference type="InterPro" id="IPR050275">
    <property type="entry name" value="PGM_Phosphatase"/>
</dbReference>
<dbReference type="PANTHER" id="PTHR48100">
    <property type="entry name" value="BROAD-SPECIFICITY PHOSPHATASE YOR283W-RELATED"/>
    <property type="match status" value="1"/>
</dbReference>
<dbReference type="PANTHER" id="PTHR48100:SF1">
    <property type="entry name" value="HISTIDINE PHOSPHATASE FAMILY PROTEIN-RELATED"/>
    <property type="match status" value="1"/>
</dbReference>
<dbReference type="Pfam" id="PF00300">
    <property type="entry name" value="His_Phos_1"/>
    <property type="match status" value="1"/>
</dbReference>
<dbReference type="SMART" id="SM00855">
    <property type="entry name" value="PGAM"/>
    <property type="match status" value="1"/>
</dbReference>
<dbReference type="SUPFAM" id="SSF53254">
    <property type="entry name" value="Phosphoglycerate mutase-like"/>
    <property type="match status" value="1"/>
</dbReference>
<gene>
    <name evidence="5" type="primary">PMU1</name>
    <name type="ordered locus">YKL128C</name>
</gene>
<feature type="chain" id="PRO_0000203152" description="Probable phosphoglycerate mutase PMU1">
    <location>
        <begin position="1"/>
        <end position="295"/>
    </location>
</feature>
<feature type="active site" description="Tele-phosphohistidine intermediate" evidence="1">
    <location>
        <position position="61"/>
    </location>
</feature>
<feature type="active site" description="Proton donor/acceptor" evidence="1">
    <location>
        <position position="170"/>
    </location>
</feature>
<feature type="site" description="Transition state stabilizer" evidence="1">
    <location>
        <position position="254"/>
    </location>
</feature>
<feature type="sequence conflict" description="In Ref. 3; AAT92919." evidence="6" ref="3">
    <original>I</original>
    <variation>V</variation>
    <location>
        <position position="44"/>
    </location>
</feature>
<sequence>MSLRAVPGYFAAYPSEGFQGLDSTKYDHLELINHKNWKELYHAIPRNTKNRHYKLLILARHGQGYHNAAILRYGMEKWDAYWSLLSGDEHGEWLDSKLTPLGKDQVRRTGSNVLLPMAKQLGMLPHVFFSSPMRRCLETFIESWTPVLAETQELPAGTKISTRIIEGLRETLGSHTCDKRVAHSMAVDEYQDFSTESGHTVHWQYVPDYPEDDELWLPDHRETCAEMDKRTLNGLFELFNQLSSEEKFISLTCHSGVIQSVLRNLQHPPIYNLDTGKVVAVVVEVPVNTADRGRL</sequence>
<protein>
    <recommendedName>
        <fullName>Probable phosphoglycerate mutase PMU1</fullName>
        <ecNumber>5.4.-.-</ecNumber>
    </recommendedName>
    <alternativeName>
        <fullName evidence="5">Phosphomutase homolog 1</fullName>
    </alternativeName>
</protein>
<keyword id="KW-0963">Cytoplasm</keyword>
<keyword id="KW-0413">Isomerase</keyword>
<keyword id="KW-0539">Nucleus</keyword>
<keyword id="KW-1185">Reference proteome</keyword>
<proteinExistence type="evidence at protein level"/>
<name>PMU1_YEAST</name>
<accession>P36069</accession>
<accession>D6VX67</accession>
<accession>E9P8Y9</accession>
<reference key="1">
    <citation type="journal article" date="1994" name="Nature">
        <title>Complete DNA sequence of yeast chromosome XI.</title>
        <authorList>
            <person name="Dujon B."/>
            <person name="Alexandraki D."/>
            <person name="Andre B."/>
            <person name="Ansorge W."/>
            <person name="Baladron V."/>
            <person name="Ballesta J.P.G."/>
            <person name="Banrevi A."/>
            <person name="Bolle P.-A."/>
            <person name="Bolotin-Fukuhara M."/>
            <person name="Bossier P."/>
            <person name="Bou G."/>
            <person name="Boyer J."/>
            <person name="Buitrago M.J."/>
            <person name="Cheret G."/>
            <person name="Colleaux L."/>
            <person name="Daignan-Fornier B."/>
            <person name="del Rey F."/>
            <person name="Dion C."/>
            <person name="Domdey H."/>
            <person name="Duesterhoeft A."/>
            <person name="Duesterhus S."/>
            <person name="Entian K.-D."/>
            <person name="Erfle H."/>
            <person name="Esteban P.F."/>
            <person name="Feldmann H."/>
            <person name="Fernandes L."/>
            <person name="Fobo G.M."/>
            <person name="Fritz C."/>
            <person name="Fukuhara H."/>
            <person name="Gabel C."/>
            <person name="Gaillon L."/>
            <person name="Garcia-Cantalejo J.M."/>
            <person name="Garcia-Ramirez J.J."/>
            <person name="Gent M.E."/>
            <person name="Ghazvini M."/>
            <person name="Goffeau A."/>
            <person name="Gonzalez A."/>
            <person name="Grothues D."/>
            <person name="Guerreiro P."/>
            <person name="Hegemann J.H."/>
            <person name="Hewitt N."/>
            <person name="Hilger F."/>
            <person name="Hollenberg C.P."/>
            <person name="Horaitis O."/>
            <person name="Indge K.J."/>
            <person name="Jacquier A."/>
            <person name="James C.M."/>
            <person name="Jauniaux J.-C."/>
            <person name="Jimenez A."/>
            <person name="Keuchel H."/>
            <person name="Kirchrath L."/>
            <person name="Kleine K."/>
            <person name="Koetter P."/>
            <person name="Legrain P."/>
            <person name="Liebl S."/>
            <person name="Louis E.J."/>
            <person name="Maia e Silva A."/>
            <person name="Marck C."/>
            <person name="Monnier A.-L."/>
            <person name="Moestl D."/>
            <person name="Mueller S."/>
            <person name="Obermaier B."/>
            <person name="Oliver S.G."/>
            <person name="Pallier C."/>
            <person name="Pascolo S."/>
            <person name="Pfeiffer F."/>
            <person name="Philippsen P."/>
            <person name="Planta R.J."/>
            <person name="Pohl F.M."/>
            <person name="Pohl T.M."/>
            <person name="Poehlmann R."/>
            <person name="Portetelle D."/>
            <person name="Purnelle B."/>
            <person name="Puzos V."/>
            <person name="Ramezani Rad M."/>
            <person name="Rasmussen S.W."/>
            <person name="Remacha M.A."/>
            <person name="Revuelta J.L."/>
            <person name="Richard G.-F."/>
            <person name="Rieger M."/>
            <person name="Rodrigues-Pousada C."/>
            <person name="Rose M."/>
            <person name="Rupp T."/>
            <person name="Santos M.A."/>
            <person name="Schwager C."/>
            <person name="Sensen C."/>
            <person name="Skala J."/>
            <person name="Soares H."/>
            <person name="Sor F."/>
            <person name="Stegemann J."/>
            <person name="Tettelin H."/>
            <person name="Thierry A."/>
            <person name="Tzermia M."/>
            <person name="Urrestarazu L.A."/>
            <person name="van Dyck L."/>
            <person name="van Vliet-Reedijk J.C."/>
            <person name="Valens M."/>
            <person name="Vandenbol M."/>
            <person name="Vilela C."/>
            <person name="Vissers S."/>
            <person name="von Wettstein D."/>
            <person name="Voss H."/>
            <person name="Wiemann S."/>
            <person name="Xu G."/>
            <person name="Zimmermann J."/>
            <person name="Haasemann M."/>
            <person name="Becker I."/>
            <person name="Mewes H.-W."/>
        </authorList>
    </citation>
    <scope>NUCLEOTIDE SEQUENCE [LARGE SCALE GENOMIC DNA]</scope>
    <source>
        <strain>ATCC 204508 / S288c</strain>
    </source>
</reference>
<reference key="2">
    <citation type="journal article" date="2014" name="G3 (Bethesda)">
        <title>The reference genome sequence of Saccharomyces cerevisiae: Then and now.</title>
        <authorList>
            <person name="Engel S.R."/>
            <person name="Dietrich F.S."/>
            <person name="Fisk D.G."/>
            <person name="Binkley G."/>
            <person name="Balakrishnan R."/>
            <person name="Costanzo M.C."/>
            <person name="Dwight S.S."/>
            <person name="Hitz B.C."/>
            <person name="Karra K."/>
            <person name="Nash R.S."/>
            <person name="Weng S."/>
            <person name="Wong E.D."/>
            <person name="Lloyd P."/>
            <person name="Skrzypek M.S."/>
            <person name="Miyasato S.R."/>
            <person name="Simison M."/>
            <person name="Cherry J.M."/>
        </authorList>
    </citation>
    <scope>GENOME REANNOTATION</scope>
    <source>
        <strain>ATCC 204508 / S288c</strain>
    </source>
</reference>
<reference key="3">
    <citation type="journal article" date="2007" name="Genome Res.">
        <title>Approaching a complete repository of sequence-verified protein-encoding clones for Saccharomyces cerevisiae.</title>
        <authorList>
            <person name="Hu Y."/>
            <person name="Rolfs A."/>
            <person name="Bhullar B."/>
            <person name="Murthy T.V.S."/>
            <person name="Zhu C."/>
            <person name="Berger M.F."/>
            <person name="Camargo A.A."/>
            <person name="Kelley F."/>
            <person name="McCarron S."/>
            <person name="Jepson D."/>
            <person name="Richardson A."/>
            <person name="Raphael J."/>
            <person name="Moreira D."/>
            <person name="Taycher E."/>
            <person name="Zuo D."/>
            <person name="Mohr S."/>
            <person name="Kane M.F."/>
            <person name="Williamson J."/>
            <person name="Simpson A.J.G."/>
            <person name="Bulyk M.L."/>
            <person name="Harlow E."/>
            <person name="Marsischky G."/>
            <person name="Kolodner R.D."/>
            <person name="LaBaer J."/>
        </authorList>
    </citation>
    <scope>NUCLEOTIDE SEQUENCE [GENOMIC DNA]</scope>
    <source>
        <strain>ATCC 204508 / S288c</strain>
    </source>
</reference>
<reference key="4">
    <citation type="journal article" date="1996" name="Genetics">
        <title>Synergy between trehalose and Hsp104 for thermotolerance in Saccharomyces cerevisiae.</title>
        <authorList>
            <person name="Elliott B."/>
            <person name="Haltiwanger R.S."/>
            <person name="Futcher B."/>
        </authorList>
    </citation>
    <scope>FUNCTION</scope>
</reference>
<reference key="5">
    <citation type="journal article" date="2003" name="Nature">
        <title>Global analysis of protein localization in budding yeast.</title>
        <authorList>
            <person name="Huh W.-K."/>
            <person name="Falvo J.V."/>
            <person name="Gerke L.C."/>
            <person name="Carroll A.S."/>
            <person name="Howson R.W."/>
            <person name="Weissman J.S."/>
            <person name="O'Shea E.K."/>
        </authorList>
    </citation>
    <scope>SUBCELLULAR LOCATION [LARGE SCALE ANALYSIS]</scope>
</reference>
<reference key="6">
    <citation type="journal article" date="2003" name="Nature">
        <title>Global analysis of protein expression in yeast.</title>
        <authorList>
            <person name="Ghaemmaghami S."/>
            <person name="Huh W.-K."/>
            <person name="Bower K."/>
            <person name="Howson R.W."/>
            <person name="Belle A."/>
            <person name="Dephoure N."/>
            <person name="O'Shea E.K."/>
            <person name="Weissman J.S."/>
        </authorList>
    </citation>
    <scope>LEVEL OF PROTEIN EXPRESSION [LARGE SCALE ANALYSIS]</scope>
</reference>
<evidence type="ECO:0000250" key="1">
    <source>
        <dbReference type="UniProtKB" id="P62707"/>
    </source>
</evidence>
<evidence type="ECO:0000269" key="2">
    <source>
    </source>
</evidence>
<evidence type="ECO:0000269" key="3">
    <source>
    </source>
</evidence>
<evidence type="ECO:0000269" key="4">
    <source>
    </source>
</evidence>
<evidence type="ECO:0000303" key="5">
    <source>
    </source>
</evidence>
<evidence type="ECO:0000305" key="6"/>